<protein>
    <recommendedName>
        <fullName evidence="1">Large ribosomal subunit protein uL13</fullName>
    </recommendedName>
    <alternativeName>
        <fullName evidence="2">50S ribosomal protein L13</fullName>
    </alternativeName>
</protein>
<dbReference type="EMBL" id="CP000086">
    <property type="protein sequence ID" value="ABC39020.1"/>
    <property type="status" value="ALT_INIT"/>
    <property type="molecule type" value="Genomic_DNA"/>
</dbReference>
<dbReference type="RefSeq" id="WP_004522094.1">
    <property type="nucleotide sequence ID" value="NZ_CP008785.1"/>
</dbReference>
<dbReference type="SMR" id="Q2SZ69"/>
<dbReference type="GeneID" id="93126851"/>
<dbReference type="KEGG" id="bte:BTH_I1233"/>
<dbReference type="HOGENOM" id="CLU_082184_2_2_4"/>
<dbReference type="Proteomes" id="UP000001930">
    <property type="component" value="Chromosome I"/>
</dbReference>
<dbReference type="GO" id="GO:0022625">
    <property type="term" value="C:cytosolic large ribosomal subunit"/>
    <property type="evidence" value="ECO:0007669"/>
    <property type="project" value="TreeGrafter"/>
</dbReference>
<dbReference type="GO" id="GO:0003729">
    <property type="term" value="F:mRNA binding"/>
    <property type="evidence" value="ECO:0007669"/>
    <property type="project" value="TreeGrafter"/>
</dbReference>
<dbReference type="GO" id="GO:0003735">
    <property type="term" value="F:structural constituent of ribosome"/>
    <property type="evidence" value="ECO:0007669"/>
    <property type="project" value="InterPro"/>
</dbReference>
<dbReference type="GO" id="GO:0017148">
    <property type="term" value="P:negative regulation of translation"/>
    <property type="evidence" value="ECO:0007669"/>
    <property type="project" value="TreeGrafter"/>
</dbReference>
<dbReference type="GO" id="GO:0006412">
    <property type="term" value="P:translation"/>
    <property type="evidence" value="ECO:0007669"/>
    <property type="project" value="UniProtKB-UniRule"/>
</dbReference>
<dbReference type="CDD" id="cd00392">
    <property type="entry name" value="Ribosomal_L13"/>
    <property type="match status" value="1"/>
</dbReference>
<dbReference type="FunFam" id="3.90.1180.10:FF:000001">
    <property type="entry name" value="50S ribosomal protein L13"/>
    <property type="match status" value="1"/>
</dbReference>
<dbReference type="Gene3D" id="3.90.1180.10">
    <property type="entry name" value="Ribosomal protein L13"/>
    <property type="match status" value="1"/>
</dbReference>
<dbReference type="HAMAP" id="MF_01366">
    <property type="entry name" value="Ribosomal_uL13"/>
    <property type="match status" value="1"/>
</dbReference>
<dbReference type="InterPro" id="IPR005822">
    <property type="entry name" value="Ribosomal_uL13"/>
</dbReference>
<dbReference type="InterPro" id="IPR005823">
    <property type="entry name" value="Ribosomal_uL13_bac-type"/>
</dbReference>
<dbReference type="InterPro" id="IPR036899">
    <property type="entry name" value="Ribosomal_uL13_sf"/>
</dbReference>
<dbReference type="NCBIfam" id="TIGR01066">
    <property type="entry name" value="rplM_bact"/>
    <property type="match status" value="1"/>
</dbReference>
<dbReference type="PANTHER" id="PTHR11545:SF2">
    <property type="entry name" value="LARGE RIBOSOMAL SUBUNIT PROTEIN UL13M"/>
    <property type="match status" value="1"/>
</dbReference>
<dbReference type="PANTHER" id="PTHR11545">
    <property type="entry name" value="RIBOSOMAL PROTEIN L13"/>
    <property type="match status" value="1"/>
</dbReference>
<dbReference type="Pfam" id="PF00572">
    <property type="entry name" value="Ribosomal_L13"/>
    <property type="match status" value="1"/>
</dbReference>
<dbReference type="PIRSF" id="PIRSF002181">
    <property type="entry name" value="Ribosomal_L13"/>
    <property type="match status" value="1"/>
</dbReference>
<dbReference type="SUPFAM" id="SSF52161">
    <property type="entry name" value="Ribosomal protein L13"/>
    <property type="match status" value="1"/>
</dbReference>
<feature type="chain" id="PRO_0000261704" description="Large ribosomal subunit protein uL13">
    <location>
        <begin position="1"/>
        <end position="142"/>
    </location>
</feature>
<organism>
    <name type="scientific">Burkholderia thailandensis (strain ATCC 700388 / DSM 13276 / CCUG 48851 / CIP 106301 / E264)</name>
    <dbReference type="NCBI Taxonomy" id="271848"/>
    <lineage>
        <taxon>Bacteria</taxon>
        <taxon>Pseudomonadati</taxon>
        <taxon>Pseudomonadota</taxon>
        <taxon>Betaproteobacteria</taxon>
        <taxon>Burkholderiales</taxon>
        <taxon>Burkholderiaceae</taxon>
        <taxon>Burkholderia</taxon>
        <taxon>pseudomallei group</taxon>
    </lineage>
</organism>
<keyword id="KW-0687">Ribonucleoprotein</keyword>
<keyword id="KW-0689">Ribosomal protein</keyword>
<accession>Q2SZ69</accession>
<sequence length="142" mass="15971">MKTFSAKAHEVTREWYVIDATDKVLGRVASEVARRLRGKHKPEFTPHVDTGDFIIVINASKLKVTGNKTLDKKYYRHSGYPGGIYETTFGKMQERFPGRALEKAVKGMLPKGPLGYAMIKKLKVYAEATHPHSAQQPKALEI</sequence>
<name>RL13_BURTA</name>
<evidence type="ECO:0000255" key="1">
    <source>
        <dbReference type="HAMAP-Rule" id="MF_01366"/>
    </source>
</evidence>
<evidence type="ECO:0000305" key="2"/>
<gene>
    <name evidence="1" type="primary">rplM</name>
    <name type="ordered locus">BTH_I1233</name>
</gene>
<proteinExistence type="inferred from homology"/>
<reference key="1">
    <citation type="journal article" date="2005" name="BMC Genomics">
        <title>Bacterial genome adaptation to niches: divergence of the potential virulence genes in three Burkholderia species of different survival strategies.</title>
        <authorList>
            <person name="Kim H.S."/>
            <person name="Schell M.A."/>
            <person name="Yu Y."/>
            <person name="Ulrich R.L."/>
            <person name="Sarria S.H."/>
            <person name="Nierman W.C."/>
            <person name="DeShazer D."/>
        </authorList>
    </citation>
    <scope>NUCLEOTIDE SEQUENCE [LARGE SCALE GENOMIC DNA]</scope>
    <source>
        <strain>ATCC 700388 / DSM 13276 / CCUG 48851 / CIP 106301 / E264</strain>
    </source>
</reference>
<comment type="function">
    <text evidence="1">This protein is one of the early assembly proteins of the 50S ribosomal subunit, although it is not seen to bind rRNA by itself. It is important during the early stages of 50S assembly.</text>
</comment>
<comment type="subunit">
    <text evidence="1">Part of the 50S ribosomal subunit.</text>
</comment>
<comment type="similarity">
    <text evidence="1">Belongs to the universal ribosomal protein uL13 family.</text>
</comment>
<comment type="sequence caution" evidence="2">
    <conflict type="erroneous initiation">
        <sequence resource="EMBL-CDS" id="ABC39020"/>
    </conflict>
</comment>